<organism>
    <name type="scientific">Nocardia farcinica (strain IFM 10152)</name>
    <dbReference type="NCBI Taxonomy" id="247156"/>
    <lineage>
        <taxon>Bacteria</taxon>
        <taxon>Bacillati</taxon>
        <taxon>Actinomycetota</taxon>
        <taxon>Actinomycetes</taxon>
        <taxon>Mycobacteriales</taxon>
        <taxon>Nocardiaceae</taxon>
        <taxon>Nocardia</taxon>
    </lineage>
</organism>
<comment type="function">
    <text evidence="1">Cleaves peptides in various proteins in a process that requires ATP hydrolysis. Has a chymotrypsin-like activity. Plays a major role in the degradation of misfolded proteins.</text>
</comment>
<comment type="catalytic activity">
    <reaction evidence="1">
        <text>Hydrolysis of proteins to small peptides in the presence of ATP and magnesium. alpha-casein is the usual test substrate. In the absence of ATP, only oligopeptides shorter than five residues are hydrolyzed (such as succinyl-Leu-Tyr-|-NHMec, and Leu-Tyr-Leu-|-Tyr-Trp, in which cleavage of the -Tyr-|-Leu- and -Tyr-|-Trp bonds also occurs).</text>
        <dbReference type="EC" id="3.4.21.92"/>
    </reaction>
</comment>
<comment type="subunit">
    <text evidence="1">Fourteen ClpP subunits assemble into 2 heptameric rings which stack back to back to give a disk-like structure with a central cavity, resembling the structure of eukaryotic proteasomes.</text>
</comment>
<comment type="subcellular location">
    <subcellularLocation>
        <location evidence="1">Cytoplasm</location>
    </subcellularLocation>
</comment>
<comment type="similarity">
    <text evidence="1">Belongs to the peptidase S14 family.</text>
</comment>
<comment type="caution">
    <text evidence="2">Ala-101 is present instead of the conserved Ser which is expected to be an active site residue.</text>
</comment>
<gene>
    <name evidence="1" type="primary">clpP1</name>
    <name type="ordered locus">NFA_11720</name>
</gene>
<keyword id="KW-0963">Cytoplasm</keyword>
<keyword id="KW-0378">Hydrolase</keyword>
<keyword id="KW-0645">Protease</keyword>
<keyword id="KW-1185">Reference proteome</keyword>
<keyword id="KW-0720">Serine protease</keyword>
<proteinExistence type="inferred from homology"/>
<accession>Q5Z0M4</accession>
<name>CLPP1_NOCFA</name>
<evidence type="ECO:0000255" key="1">
    <source>
        <dbReference type="HAMAP-Rule" id="MF_00444"/>
    </source>
</evidence>
<evidence type="ECO:0000305" key="2"/>
<feature type="chain" id="PRO_0000179604" description="ATP-dependent Clp protease proteolytic subunit 1">
    <location>
        <begin position="1"/>
        <end position="197"/>
    </location>
</feature>
<feature type="active site" evidence="1">
    <location>
        <position position="126"/>
    </location>
</feature>
<reference key="1">
    <citation type="journal article" date="2004" name="Proc. Natl. Acad. Sci. U.S.A.">
        <title>The complete genomic sequence of Nocardia farcinica IFM 10152.</title>
        <authorList>
            <person name="Ishikawa J."/>
            <person name="Yamashita A."/>
            <person name="Mikami Y."/>
            <person name="Hoshino Y."/>
            <person name="Kurita H."/>
            <person name="Hotta K."/>
            <person name="Shiba T."/>
            <person name="Hattori M."/>
        </authorList>
    </citation>
    <scope>NUCLEOTIDE SEQUENCE [LARGE SCALE GENOMIC DNA]</scope>
    <source>
        <strain>IFM 10152</strain>
    </source>
</reference>
<sequence>MSTYTIPNVIAQHPRGGERITDIYSHLLAERIVYLGTPIDSGVANALIAQLLHLESESPDQEINFYINCEGGDLPSMLAVYDTMQHIGAPVHTTCVGQAIAVGAVLLAGGAPGQRAMLPHARVVLHQPAARGQGPIPDLILQADELVRMRSEIEAILSRHTGRSPEQLREDTDRDRVFTATAALEYGLIDTVLSPRG</sequence>
<dbReference type="EC" id="3.4.21.92" evidence="1"/>
<dbReference type="EMBL" id="AP006618">
    <property type="protein sequence ID" value="BAD56017.1"/>
    <property type="molecule type" value="Genomic_DNA"/>
</dbReference>
<dbReference type="RefSeq" id="WP_011207702.1">
    <property type="nucleotide sequence ID" value="NC_006361.1"/>
</dbReference>
<dbReference type="SMR" id="Q5Z0M4"/>
<dbReference type="STRING" id="247156.NFA_11720"/>
<dbReference type="MEROPS" id="S14.009"/>
<dbReference type="GeneID" id="61131994"/>
<dbReference type="KEGG" id="nfa:NFA_11720"/>
<dbReference type="eggNOG" id="COG0740">
    <property type="taxonomic scope" value="Bacteria"/>
</dbReference>
<dbReference type="HOGENOM" id="CLU_058707_3_2_11"/>
<dbReference type="OrthoDB" id="9802800at2"/>
<dbReference type="Proteomes" id="UP000006820">
    <property type="component" value="Chromosome"/>
</dbReference>
<dbReference type="GO" id="GO:0005737">
    <property type="term" value="C:cytoplasm"/>
    <property type="evidence" value="ECO:0007669"/>
    <property type="project" value="UniProtKB-SubCell"/>
</dbReference>
<dbReference type="GO" id="GO:0009368">
    <property type="term" value="C:endopeptidase Clp complex"/>
    <property type="evidence" value="ECO:0007669"/>
    <property type="project" value="TreeGrafter"/>
</dbReference>
<dbReference type="GO" id="GO:0004176">
    <property type="term" value="F:ATP-dependent peptidase activity"/>
    <property type="evidence" value="ECO:0007669"/>
    <property type="project" value="InterPro"/>
</dbReference>
<dbReference type="GO" id="GO:0051117">
    <property type="term" value="F:ATPase binding"/>
    <property type="evidence" value="ECO:0007669"/>
    <property type="project" value="TreeGrafter"/>
</dbReference>
<dbReference type="GO" id="GO:0004252">
    <property type="term" value="F:serine-type endopeptidase activity"/>
    <property type="evidence" value="ECO:0007669"/>
    <property type="project" value="UniProtKB-UniRule"/>
</dbReference>
<dbReference type="GO" id="GO:0006515">
    <property type="term" value="P:protein quality control for misfolded or incompletely synthesized proteins"/>
    <property type="evidence" value="ECO:0007669"/>
    <property type="project" value="TreeGrafter"/>
</dbReference>
<dbReference type="CDD" id="cd07017">
    <property type="entry name" value="S14_ClpP_2"/>
    <property type="match status" value="1"/>
</dbReference>
<dbReference type="Gene3D" id="3.90.226.10">
    <property type="entry name" value="2-enoyl-CoA Hydratase, Chain A, domain 1"/>
    <property type="match status" value="1"/>
</dbReference>
<dbReference type="HAMAP" id="MF_00444">
    <property type="entry name" value="ClpP"/>
    <property type="match status" value="1"/>
</dbReference>
<dbReference type="InterPro" id="IPR001907">
    <property type="entry name" value="ClpP"/>
</dbReference>
<dbReference type="InterPro" id="IPR029045">
    <property type="entry name" value="ClpP/crotonase-like_dom_sf"/>
</dbReference>
<dbReference type="InterPro" id="IPR023562">
    <property type="entry name" value="ClpP/TepA"/>
</dbReference>
<dbReference type="PANTHER" id="PTHR10381">
    <property type="entry name" value="ATP-DEPENDENT CLP PROTEASE PROTEOLYTIC SUBUNIT"/>
    <property type="match status" value="1"/>
</dbReference>
<dbReference type="PANTHER" id="PTHR10381:SF26">
    <property type="entry name" value="ATP-DEPENDENT CLP PROTEASE PROTEOLYTIC SUBUNIT-LIKE-RELATED"/>
    <property type="match status" value="1"/>
</dbReference>
<dbReference type="Pfam" id="PF00574">
    <property type="entry name" value="CLP_protease"/>
    <property type="match status" value="1"/>
</dbReference>
<dbReference type="PRINTS" id="PR00127">
    <property type="entry name" value="CLPPROTEASEP"/>
</dbReference>
<dbReference type="SUPFAM" id="SSF52096">
    <property type="entry name" value="ClpP/crotonase"/>
    <property type="match status" value="1"/>
</dbReference>
<protein>
    <recommendedName>
        <fullName evidence="1">ATP-dependent Clp protease proteolytic subunit 1</fullName>
        <ecNumber evidence="1">3.4.21.92</ecNumber>
    </recommendedName>
    <alternativeName>
        <fullName evidence="1">Endopeptidase Clp 1</fullName>
    </alternativeName>
</protein>